<sequence>MAKANEIKRGMAISYNGKLLLVRDIDVQSPSARGASTLYKMRFSDVRTGLKVEERFKGDDILDTISLSRRKVNFSYIDGEEYVFMDDEDYTPYIFKKDQIEDELLFIPEAGLPGMQVLTLEGQVLALELPQTVDMEIVDTAPGIKGASASARNKPATMATGLTIQVPEYLSAGDKIRIHIAERRYMSRAD</sequence>
<comment type="similarity">
    <text evidence="1">Belongs to the elongation factor P family.</text>
</comment>
<feature type="chain" id="PRO_1000061457" description="Elongation factor P-like protein">
    <location>
        <begin position="1"/>
        <end position="190"/>
    </location>
</feature>
<gene>
    <name type="ordered locus">Spro_3237</name>
</gene>
<proteinExistence type="inferred from homology"/>
<name>EFPL_SERP5</name>
<accession>A8GGU5</accession>
<organism>
    <name type="scientific">Serratia proteamaculans (strain 568)</name>
    <dbReference type="NCBI Taxonomy" id="399741"/>
    <lineage>
        <taxon>Bacteria</taxon>
        <taxon>Pseudomonadati</taxon>
        <taxon>Pseudomonadota</taxon>
        <taxon>Gammaproteobacteria</taxon>
        <taxon>Enterobacterales</taxon>
        <taxon>Yersiniaceae</taxon>
        <taxon>Serratia</taxon>
    </lineage>
</organism>
<evidence type="ECO:0000255" key="1">
    <source>
        <dbReference type="HAMAP-Rule" id="MF_00646"/>
    </source>
</evidence>
<reference key="1">
    <citation type="submission" date="2007-09" db="EMBL/GenBank/DDBJ databases">
        <title>Complete sequence of chromosome of Serratia proteamaculans 568.</title>
        <authorList>
            <consortium name="US DOE Joint Genome Institute"/>
            <person name="Copeland A."/>
            <person name="Lucas S."/>
            <person name="Lapidus A."/>
            <person name="Barry K."/>
            <person name="Glavina del Rio T."/>
            <person name="Dalin E."/>
            <person name="Tice H."/>
            <person name="Pitluck S."/>
            <person name="Chain P."/>
            <person name="Malfatti S."/>
            <person name="Shin M."/>
            <person name="Vergez L."/>
            <person name="Schmutz J."/>
            <person name="Larimer F."/>
            <person name="Land M."/>
            <person name="Hauser L."/>
            <person name="Kyrpides N."/>
            <person name="Kim E."/>
            <person name="Taghavi S."/>
            <person name="Newman L."/>
            <person name="Vangronsveld J."/>
            <person name="van der Lelie D."/>
            <person name="Richardson P."/>
        </authorList>
    </citation>
    <scope>NUCLEOTIDE SEQUENCE [LARGE SCALE GENOMIC DNA]</scope>
    <source>
        <strain>568</strain>
    </source>
</reference>
<dbReference type="EMBL" id="CP000826">
    <property type="protein sequence ID" value="ABV42335.1"/>
    <property type="molecule type" value="Genomic_DNA"/>
</dbReference>
<dbReference type="SMR" id="A8GGU5"/>
<dbReference type="STRING" id="399741.Spro_3237"/>
<dbReference type="KEGG" id="spe:Spro_3237"/>
<dbReference type="eggNOG" id="COG0231">
    <property type="taxonomic scope" value="Bacteria"/>
</dbReference>
<dbReference type="HOGENOM" id="CLU_074944_2_0_6"/>
<dbReference type="OrthoDB" id="5599402at2"/>
<dbReference type="GO" id="GO:0005737">
    <property type="term" value="C:cytoplasm"/>
    <property type="evidence" value="ECO:0007669"/>
    <property type="project" value="InterPro"/>
</dbReference>
<dbReference type="GO" id="GO:0003746">
    <property type="term" value="F:translation elongation factor activity"/>
    <property type="evidence" value="ECO:0007669"/>
    <property type="project" value="UniProtKB-UniRule"/>
</dbReference>
<dbReference type="GO" id="GO:0043043">
    <property type="term" value="P:peptide biosynthetic process"/>
    <property type="evidence" value="ECO:0007669"/>
    <property type="project" value="InterPro"/>
</dbReference>
<dbReference type="CDD" id="cd05794">
    <property type="entry name" value="S1_EF-P_repeat_2"/>
    <property type="match status" value="1"/>
</dbReference>
<dbReference type="FunFam" id="2.40.50.140:FF:000004">
    <property type="entry name" value="Elongation factor P"/>
    <property type="match status" value="1"/>
</dbReference>
<dbReference type="FunFam" id="2.30.30.30:FF:000011">
    <property type="entry name" value="Elongation factor P-like protein"/>
    <property type="match status" value="1"/>
</dbReference>
<dbReference type="FunFam" id="2.40.50.140:FF:000053">
    <property type="entry name" value="Elongation factor P-like protein"/>
    <property type="match status" value="1"/>
</dbReference>
<dbReference type="Gene3D" id="2.30.30.30">
    <property type="match status" value="1"/>
</dbReference>
<dbReference type="Gene3D" id="2.40.50.140">
    <property type="entry name" value="Nucleic acid-binding proteins"/>
    <property type="match status" value="2"/>
</dbReference>
<dbReference type="HAMAP" id="MF_00646">
    <property type="entry name" value="EFP"/>
    <property type="match status" value="1"/>
</dbReference>
<dbReference type="InterPro" id="IPR015365">
    <property type="entry name" value="Elong-fact-P_C"/>
</dbReference>
<dbReference type="InterPro" id="IPR012340">
    <property type="entry name" value="NA-bd_OB-fold"/>
</dbReference>
<dbReference type="InterPro" id="IPR014722">
    <property type="entry name" value="Rib_uL2_dom2"/>
</dbReference>
<dbReference type="InterPro" id="IPR020599">
    <property type="entry name" value="Transl_elong_fac_P/YeiP"/>
</dbReference>
<dbReference type="InterPro" id="IPR013185">
    <property type="entry name" value="Transl_elong_KOW-like"/>
</dbReference>
<dbReference type="InterPro" id="IPR011897">
    <property type="entry name" value="Transl_elong_p-like_YeiP"/>
</dbReference>
<dbReference type="InterPro" id="IPR001059">
    <property type="entry name" value="Transl_elong_P/YeiP_cen"/>
</dbReference>
<dbReference type="InterPro" id="IPR013852">
    <property type="entry name" value="Transl_elong_P/YeiP_CS"/>
</dbReference>
<dbReference type="InterPro" id="IPR008991">
    <property type="entry name" value="Translation_prot_SH3-like_sf"/>
</dbReference>
<dbReference type="NCBIfam" id="NF001810">
    <property type="entry name" value="PRK00529.1"/>
    <property type="match status" value="1"/>
</dbReference>
<dbReference type="NCBIfam" id="NF003392">
    <property type="entry name" value="PRK04542.1"/>
    <property type="match status" value="1"/>
</dbReference>
<dbReference type="NCBIfam" id="TIGR02178">
    <property type="entry name" value="yeiP"/>
    <property type="match status" value="1"/>
</dbReference>
<dbReference type="PANTHER" id="PTHR30053">
    <property type="entry name" value="ELONGATION FACTOR P"/>
    <property type="match status" value="1"/>
</dbReference>
<dbReference type="PANTHER" id="PTHR30053:SF14">
    <property type="entry name" value="TRANSLATION ELONGATION FACTOR KOW-LIKE DOMAIN-CONTAINING PROTEIN"/>
    <property type="match status" value="1"/>
</dbReference>
<dbReference type="Pfam" id="PF01132">
    <property type="entry name" value="EFP"/>
    <property type="match status" value="1"/>
</dbReference>
<dbReference type="Pfam" id="PF08207">
    <property type="entry name" value="EFP_N"/>
    <property type="match status" value="1"/>
</dbReference>
<dbReference type="Pfam" id="PF09285">
    <property type="entry name" value="Elong-fact-P_C"/>
    <property type="match status" value="1"/>
</dbReference>
<dbReference type="PIRSF" id="PIRSF005901">
    <property type="entry name" value="EF-P"/>
    <property type="match status" value="1"/>
</dbReference>
<dbReference type="SMART" id="SM01185">
    <property type="entry name" value="EFP"/>
    <property type="match status" value="1"/>
</dbReference>
<dbReference type="SMART" id="SM00841">
    <property type="entry name" value="Elong-fact-P_C"/>
    <property type="match status" value="1"/>
</dbReference>
<dbReference type="SUPFAM" id="SSF50249">
    <property type="entry name" value="Nucleic acid-binding proteins"/>
    <property type="match status" value="2"/>
</dbReference>
<dbReference type="SUPFAM" id="SSF50104">
    <property type="entry name" value="Translation proteins SH3-like domain"/>
    <property type="match status" value="1"/>
</dbReference>
<dbReference type="PROSITE" id="PS01275">
    <property type="entry name" value="EFP"/>
    <property type="match status" value="1"/>
</dbReference>
<protein>
    <recommendedName>
        <fullName evidence="1">Elongation factor P-like protein</fullName>
    </recommendedName>
</protein>